<dbReference type="EC" id="2.5.1.16" evidence="1"/>
<dbReference type="EMBL" id="BX548175">
    <property type="protein sequence ID" value="CAE22387.1"/>
    <property type="status" value="ALT_INIT"/>
    <property type="molecule type" value="Genomic_DNA"/>
</dbReference>
<dbReference type="RefSeq" id="WP_011131577.1">
    <property type="nucleotide sequence ID" value="NC_005071.1"/>
</dbReference>
<dbReference type="SMR" id="Q7V3X3"/>
<dbReference type="KEGG" id="pmt:PMT_2213"/>
<dbReference type="eggNOG" id="COG0421">
    <property type="taxonomic scope" value="Bacteria"/>
</dbReference>
<dbReference type="HOGENOM" id="CLU_048199_0_0_3"/>
<dbReference type="OrthoDB" id="9793120at2"/>
<dbReference type="UniPathway" id="UPA00248">
    <property type="reaction ID" value="UER00314"/>
</dbReference>
<dbReference type="Proteomes" id="UP000001423">
    <property type="component" value="Chromosome"/>
</dbReference>
<dbReference type="GO" id="GO:0005737">
    <property type="term" value="C:cytoplasm"/>
    <property type="evidence" value="ECO:0007669"/>
    <property type="project" value="UniProtKB-SubCell"/>
</dbReference>
<dbReference type="GO" id="GO:0004766">
    <property type="term" value="F:spermidine synthase activity"/>
    <property type="evidence" value="ECO:0007669"/>
    <property type="project" value="UniProtKB-UniRule"/>
</dbReference>
<dbReference type="GO" id="GO:0008295">
    <property type="term" value="P:spermidine biosynthetic process"/>
    <property type="evidence" value="ECO:0007669"/>
    <property type="project" value="UniProtKB-UniRule"/>
</dbReference>
<dbReference type="CDD" id="cd02440">
    <property type="entry name" value="AdoMet_MTases"/>
    <property type="match status" value="1"/>
</dbReference>
<dbReference type="Gene3D" id="2.30.140.10">
    <property type="entry name" value="Spermidine synthase, tetramerisation domain"/>
    <property type="match status" value="1"/>
</dbReference>
<dbReference type="Gene3D" id="3.40.50.150">
    <property type="entry name" value="Vaccinia Virus protein VP39"/>
    <property type="match status" value="1"/>
</dbReference>
<dbReference type="HAMAP" id="MF_00198">
    <property type="entry name" value="Spermidine_synth"/>
    <property type="match status" value="1"/>
</dbReference>
<dbReference type="InterPro" id="IPR030374">
    <property type="entry name" value="PABS"/>
</dbReference>
<dbReference type="InterPro" id="IPR030373">
    <property type="entry name" value="PABS_CS"/>
</dbReference>
<dbReference type="InterPro" id="IPR029063">
    <property type="entry name" value="SAM-dependent_MTases_sf"/>
</dbReference>
<dbReference type="InterPro" id="IPR001045">
    <property type="entry name" value="Spermi_synthase"/>
</dbReference>
<dbReference type="InterPro" id="IPR035246">
    <property type="entry name" value="Spermidine_synt_N"/>
</dbReference>
<dbReference type="InterPro" id="IPR037163">
    <property type="entry name" value="Spermidine_synt_N_sf"/>
</dbReference>
<dbReference type="NCBIfam" id="NF002010">
    <property type="entry name" value="PRK00811.1"/>
    <property type="match status" value="1"/>
</dbReference>
<dbReference type="PANTHER" id="PTHR11558:SF11">
    <property type="entry name" value="SPERMIDINE SYNTHASE"/>
    <property type="match status" value="1"/>
</dbReference>
<dbReference type="PANTHER" id="PTHR11558">
    <property type="entry name" value="SPERMIDINE/SPERMINE SYNTHASE"/>
    <property type="match status" value="1"/>
</dbReference>
<dbReference type="Pfam" id="PF17284">
    <property type="entry name" value="Spermine_synt_N"/>
    <property type="match status" value="1"/>
</dbReference>
<dbReference type="Pfam" id="PF01564">
    <property type="entry name" value="Spermine_synth"/>
    <property type="match status" value="1"/>
</dbReference>
<dbReference type="SUPFAM" id="SSF53335">
    <property type="entry name" value="S-adenosyl-L-methionine-dependent methyltransferases"/>
    <property type="match status" value="1"/>
</dbReference>
<dbReference type="PROSITE" id="PS01330">
    <property type="entry name" value="PABS_1"/>
    <property type="match status" value="1"/>
</dbReference>
<dbReference type="PROSITE" id="PS51006">
    <property type="entry name" value="PABS_2"/>
    <property type="match status" value="1"/>
</dbReference>
<sequence>MDSPSTTANGWIDEHHQGVRYGLQGRVLVDETSPYQRITVIDSSRYGKGLLLDGCWMTAEHQERHYHESLVHPALCSAAQLERVLVIGGGDGGTARECLRYQDVKHLDMVEIDRRVVELSQKHLPSLGSHAWSDPRLQLNLENGIAWVANATESSYDVILIDGSDPAGPAEGLFNQTFFEHCRRILRPGGVFATQSESPEAFRQVHIDTVRLIRQVFGYADPLYGWVPMYPSGWWSWTFAAIDGPRYRNPLPARAAAISAGCEIWSPRWQQGAFEAIPAFIERELT</sequence>
<feature type="chain" id="PRO_0000156495" description="Polyamine aminopropyltransferase">
    <location>
        <begin position="1"/>
        <end position="286"/>
    </location>
</feature>
<feature type="domain" description="PABS" evidence="1">
    <location>
        <begin position="9"/>
        <end position="242"/>
    </location>
</feature>
<feature type="active site" description="Proton acceptor" evidence="1">
    <location>
        <position position="162"/>
    </location>
</feature>
<feature type="binding site" evidence="1">
    <location>
        <position position="36"/>
    </location>
    <ligand>
        <name>S-methyl-5'-thioadenosine</name>
        <dbReference type="ChEBI" id="CHEBI:17509"/>
    </ligand>
</feature>
<feature type="binding site" evidence="1">
    <location>
        <position position="67"/>
    </location>
    <ligand>
        <name>spermidine</name>
        <dbReference type="ChEBI" id="CHEBI:57834"/>
    </ligand>
</feature>
<feature type="binding site" evidence="1">
    <location>
        <position position="91"/>
    </location>
    <ligand>
        <name>spermidine</name>
        <dbReference type="ChEBI" id="CHEBI:57834"/>
    </ligand>
</feature>
<feature type="binding site" evidence="1">
    <location>
        <position position="111"/>
    </location>
    <ligand>
        <name>S-methyl-5'-thioadenosine</name>
        <dbReference type="ChEBI" id="CHEBI:17509"/>
    </ligand>
</feature>
<feature type="binding site" evidence="1">
    <location>
        <begin position="143"/>
        <end position="144"/>
    </location>
    <ligand>
        <name>S-methyl-5'-thioadenosine</name>
        <dbReference type="ChEBI" id="CHEBI:17509"/>
    </ligand>
</feature>
<feature type="binding site" evidence="1">
    <location>
        <position position="169"/>
    </location>
    <ligand>
        <name>S-methyl-5'-thioadenosine</name>
        <dbReference type="ChEBI" id="CHEBI:17509"/>
    </ligand>
</feature>
<proteinExistence type="inferred from homology"/>
<comment type="function">
    <text evidence="1">Catalyzes the irreversible transfer of a propylamine group from the amino donor S-adenosylmethioninamine (decarboxy-AdoMet) to putrescine (1,4-diaminobutane) to yield spermidine.</text>
</comment>
<comment type="catalytic activity">
    <reaction evidence="1">
        <text>S-adenosyl 3-(methylsulfanyl)propylamine + putrescine = S-methyl-5'-thioadenosine + spermidine + H(+)</text>
        <dbReference type="Rhea" id="RHEA:12721"/>
        <dbReference type="ChEBI" id="CHEBI:15378"/>
        <dbReference type="ChEBI" id="CHEBI:17509"/>
        <dbReference type="ChEBI" id="CHEBI:57443"/>
        <dbReference type="ChEBI" id="CHEBI:57834"/>
        <dbReference type="ChEBI" id="CHEBI:326268"/>
        <dbReference type="EC" id="2.5.1.16"/>
    </reaction>
</comment>
<comment type="pathway">
    <text evidence="1">Amine and polyamine biosynthesis; spermidine biosynthesis; spermidine from putrescine: step 1/1.</text>
</comment>
<comment type="subunit">
    <text evidence="1">Homodimer or homotetramer.</text>
</comment>
<comment type="subcellular location">
    <subcellularLocation>
        <location evidence="1">Cytoplasm</location>
    </subcellularLocation>
</comment>
<comment type="similarity">
    <text evidence="1">Belongs to the spermidine/spermine synthase family.</text>
</comment>
<comment type="sequence caution" evidence="2">
    <conflict type="erroneous initiation">
        <sequence resource="EMBL-CDS" id="CAE22387"/>
    </conflict>
    <text>Extended N-terminus.</text>
</comment>
<name>SPEE_PROMM</name>
<reference key="1">
    <citation type="journal article" date="2003" name="Nature">
        <title>Genome divergence in two Prochlorococcus ecotypes reflects oceanic niche differentiation.</title>
        <authorList>
            <person name="Rocap G."/>
            <person name="Larimer F.W."/>
            <person name="Lamerdin J.E."/>
            <person name="Malfatti S."/>
            <person name="Chain P."/>
            <person name="Ahlgren N.A."/>
            <person name="Arellano A."/>
            <person name="Coleman M."/>
            <person name="Hauser L."/>
            <person name="Hess W.R."/>
            <person name="Johnson Z.I."/>
            <person name="Land M.L."/>
            <person name="Lindell D."/>
            <person name="Post A.F."/>
            <person name="Regala W."/>
            <person name="Shah M."/>
            <person name="Shaw S.L."/>
            <person name="Steglich C."/>
            <person name="Sullivan M.B."/>
            <person name="Ting C.S."/>
            <person name="Tolonen A."/>
            <person name="Webb E.A."/>
            <person name="Zinser E.R."/>
            <person name="Chisholm S.W."/>
        </authorList>
    </citation>
    <scope>NUCLEOTIDE SEQUENCE [LARGE SCALE GENOMIC DNA]</scope>
    <source>
        <strain>MIT 9313</strain>
    </source>
</reference>
<protein>
    <recommendedName>
        <fullName evidence="1">Polyamine aminopropyltransferase</fullName>
    </recommendedName>
    <alternativeName>
        <fullName evidence="1">Putrescine aminopropyltransferase</fullName>
        <shortName evidence="1">PAPT</shortName>
    </alternativeName>
    <alternativeName>
        <fullName evidence="1">Spermidine synthase</fullName>
        <shortName evidence="1">SPDS</shortName>
        <shortName evidence="1">SPDSY</shortName>
        <ecNumber evidence="1">2.5.1.16</ecNumber>
    </alternativeName>
</protein>
<keyword id="KW-0963">Cytoplasm</keyword>
<keyword id="KW-0620">Polyamine biosynthesis</keyword>
<keyword id="KW-1185">Reference proteome</keyword>
<keyword id="KW-0745">Spermidine biosynthesis</keyword>
<keyword id="KW-0808">Transferase</keyword>
<gene>
    <name evidence="1" type="primary">speE</name>
    <name type="ordered locus">PMT_2213</name>
</gene>
<evidence type="ECO:0000255" key="1">
    <source>
        <dbReference type="HAMAP-Rule" id="MF_00198"/>
    </source>
</evidence>
<evidence type="ECO:0000305" key="2"/>
<organism>
    <name type="scientific">Prochlorococcus marinus (strain MIT 9313)</name>
    <dbReference type="NCBI Taxonomy" id="74547"/>
    <lineage>
        <taxon>Bacteria</taxon>
        <taxon>Bacillati</taxon>
        <taxon>Cyanobacteriota</taxon>
        <taxon>Cyanophyceae</taxon>
        <taxon>Synechococcales</taxon>
        <taxon>Prochlorococcaceae</taxon>
        <taxon>Prochlorococcus</taxon>
    </lineage>
</organism>
<accession>Q7V3X3</accession>